<organism>
    <name type="scientific">Homo sapiens</name>
    <name type="common">Human</name>
    <dbReference type="NCBI Taxonomy" id="9606"/>
    <lineage>
        <taxon>Eukaryota</taxon>
        <taxon>Metazoa</taxon>
        <taxon>Chordata</taxon>
        <taxon>Craniata</taxon>
        <taxon>Vertebrata</taxon>
        <taxon>Euteleostomi</taxon>
        <taxon>Mammalia</taxon>
        <taxon>Eutheria</taxon>
        <taxon>Euarchontoglires</taxon>
        <taxon>Primates</taxon>
        <taxon>Haplorrhini</taxon>
        <taxon>Catarrhini</taxon>
        <taxon>Hominidae</taxon>
        <taxon>Homo</taxon>
    </lineage>
</organism>
<gene>
    <name evidence="3" type="primary">PIK3CD-AS1</name>
    <name evidence="3" type="synonym">C1orf200</name>
</gene>
<sequence length="167" mass="18168">MPSQSACPVLSTAPGTPCDLRKHLLNMVSEEKRSPQLSAKTWRRGLRLQKRRNALFLPEGDICVVGSTSGARALIPETSKLERSGTVIAYCNLELLASSDPPVWASQSTGMTGMSYRSQPQLGFKSTPPAHSSVFHHSVKAPKEDQAQEAASRPLTSQDGWNPNIKK</sequence>
<name>CA200_HUMAN</name>
<keyword id="KW-1185">Reference proteome</keyword>
<evidence type="ECO:0000256" key="1">
    <source>
        <dbReference type="SAM" id="MobiDB-lite"/>
    </source>
</evidence>
<evidence type="ECO:0000305" key="2"/>
<evidence type="ECO:0000312" key="3">
    <source>
        <dbReference type="HGNC" id="HGNC:32346"/>
    </source>
</evidence>
<dbReference type="EMBL" id="AK097325">
    <property type="protein sequence ID" value="BAC04998.1"/>
    <property type="molecule type" value="mRNA"/>
</dbReference>
<dbReference type="EMBL" id="AL691449">
    <property type="status" value="NOT_ANNOTATED_CDS"/>
    <property type="molecule type" value="Genomic_DNA"/>
</dbReference>
<dbReference type="EMBL" id="CH471130">
    <property type="protein sequence ID" value="EAW71628.1"/>
    <property type="molecule type" value="Genomic_DNA"/>
</dbReference>
<dbReference type="SMR" id="Q5SR53"/>
<dbReference type="iPTMnet" id="Q5SR53"/>
<dbReference type="PhosphoSitePlus" id="Q5SR53"/>
<dbReference type="BioMuta" id="HGNC:32346"/>
<dbReference type="MassIVE" id="Q5SR53"/>
<dbReference type="AGR" id="HGNC:32346"/>
<dbReference type="GeneCards" id="PIK3CD-AS1"/>
<dbReference type="HGNC" id="HGNC:32346">
    <property type="gene designation" value="PIK3CD-AS1"/>
</dbReference>
<dbReference type="neXtProt" id="NX_Q5SR53"/>
<dbReference type="InParanoid" id="Q5SR53"/>
<dbReference type="PAN-GO" id="Q5SR53">
    <property type="GO annotations" value="0 GO annotations based on evolutionary models"/>
</dbReference>
<dbReference type="PhylomeDB" id="Q5SR53"/>
<dbReference type="Pharos" id="Q5SR53">
    <property type="development level" value="Tdark"/>
</dbReference>
<dbReference type="Proteomes" id="UP000005640">
    <property type="component" value="Unplaced"/>
</dbReference>
<dbReference type="RNAct" id="Q5SR53">
    <property type="molecule type" value="protein"/>
</dbReference>
<dbReference type="PRINTS" id="PR02045">
    <property type="entry name" value="F138DOMAIN"/>
</dbReference>
<protein>
    <recommendedName>
        <fullName evidence="3">Putative uncharacterized protein PIK3CD-AS1</fullName>
    </recommendedName>
    <alternativeName>
        <fullName evidence="3">PIK3CD antisense RNA 1</fullName>
    </alternativeName>
    <alternativeName>
        <fullName evidence="2">PIK3CD antisense gene protein 1</fullName>
    </alternativeName>
</protein>
<feature type="chain" id="PRO_0000342663" description="Putative uncharacterized protein PIK3CD-AS1">
    <location>
        <begin position="1"/>
        <end position="167"/>
    </location>
</feature>
<feature type="region of interest" description="Disordered" evidence="1">
    <location>
        <begin position="115"/>
        <end position="167"/>
    </location>
</feature>
<feature type="sequence conflict" description="In Ref. 1; BAC04998." evidence="2" ref="1">
    <original>S</original>
    <variation>N</variation>
    <location>
        <position position="108"/>
    </location>
</feature>
<accession>Q5SR53</accession>
<accession>Q8N853</accession>
<proteinExistence type="uncertain"/>
<reference key="1">
    <citation type="journal article" date="2004" name="Nat. Genet.">
        <title>Complete sequencing and characterization of 21,243 full-length human cDNAs.</title>
        <authorList>
            <person name="Ota T."/>
            <person name="Suzuki Y."/>
            <person name="Nishikawa T."/>
            <person name="Otsuki T."/>
            <person name="Sugiyama T."/>
            <person name="Irie R."/>
            <person name="Wakamatsu A."/>
            <person name="Hayashi K."/>
            <person name="Sato H."/>
            <person name="Nagai K."/>
            <person name="Kimura K."/>
            <person name="Makita H."/>
            <person name="Sekine M."/>
            <person name="Obayashi M."/>
            <person name="Nishi T."/>
            <person name="Shibahara T."/>
            <person name="Tanaka T."/>
            <person name="Ishii S."/>
            <person name="Yamamoto J."/>
            <person name="Saito K."/>
            <person name="Kawai Y."/>
            <person name="Isono Y."/>
            <person name="Nakamura Y."/>
            <person name="Nagahari K."/>
            <person name="Murakami K."/>
            <person name="Yasuda T."/>
            <person name="Iwayanagi T."/>
            <person name="Wagatsuma M."/>
            <person name="Shiratori A."/>
            <person name="Sudo H."/>
            <person name="Hosoiri T."/>
            <person name="Kaku Y."/>
            <person name="Kodaira H."/>
            <person name="Kondo H."/>
            <person name="Sugawara M."/>
            <person name="Takahashi M."/>
            <person name="Kanda K."/>
            <person name="Yokoi T."/>
            <person name="Furuya T."/>
            <person name="Kikkawa E."/>
            <person name="Omura Y."/>
            <person name="Abe K."/>
            <person name="Kamihara K."/>
            <person name="Katsuta N."/>
            <person name="Sato K."/>
            <person name="Tanikawa M."/>
            <person name="Yamazaki M."/>
            <person name="Ninomiya K."/>
            <person name="Ishibashi T."/>
            <person name="Yamashita H."/>
            <person name="Murakawa K."/>
            <person name="Fujimori K."/>
            <person name="Tanai H."/>
            <person name="Kimata M."/>
            <person name="Watanabe M."/>
            <person name="Hiraoka S."/>
            <person name="Chiba Y."/>
            <person name="Ishida S."/>
            <person name="Ono Y."/>
            <person name="Takiguchi S."/>
            <person name="Watanabe S."/>
            <person name="Yosida M."/>
            <person name="Hotuta T."/>
            <person name="Kusano J."/>
            <person name="Kanehori K."/>
            <person name="Takahashi-Fujii A."/>
            <person name="Hara H."/>
            <person name="Tanase T.-O."/>
            <person name="Nomura Y."/>
            <person name="Togiya S."/>
            <person name="Komai F."/>
            <person name="Hara R."/>
            <person name="Takeuchi K."/>
            <person name="Arita M."/>
            <person name="Imose N."/>
            <person name="Musashino K."/>
            <person name="Yuuki H."/>
            <person name="Oshima A."/>
            <person name="Sasaki N."/>
            <person name="Aotsuka S."/>
            <person name="Yoshikawa Y."/>
            <person name="Matsunawa H."/>
            <person name="Ichihara T."/>
            <person name="Shiohata N."/>
            <person name="Sano S."/>
            <person name="Moriya S."/>
            <person name="Momiyama H."/>
            <person name="Satoh N."/>
            <person name="Takami S."/>
            <person name="Terashima Y."/>
            <person name="Suzuki O."/>
            <person name="Nakagawa S."/>
            <person name="Senoh A."/>
            <person name="Mizoguchi H."/>
            <person name="Goto Y."/>
            <person name="Shimizu F."/>
            <person name="Wakebe H."/>
            <person name="Hishigaki H."/>
            <person name="Watanabe T."/>
            <person name="Sugiyama A."/>
            <person name="Takemoto M."/>
            <person name="Kawakami B."/>
            <person name="Yamazaki M."/>
            <person name="Watanabe K."/>
            <person name="Kumagai A."/>
            <person name="Itakura S."/>
            <person name="Fukuzumi Y."/>
            <person name="Fujimori Y."/>
            <person name="Komiyama M."/>
            <person name="Tashiro H."/>
            <person name="Tanigami A."/>
            <person name="Fujiwara T."/>
            <person name="Ono T."/>
            <person name="Yamada K."/>
            <person name="Fujii Y."/>
            <person name="Ozaki K."/>
            <person name="Hirao M."/>
            <person name="Ohmori Y."/>
            <person name="Kawabata A."/>
            <person name="Hikiji T."/>
            <person name="Kobatake N."/>
            <person name="Inagaki H."/>
            <person name="Ikema Y."/>
            <person name="Okamoto S."/>
            <person name="Okitani R."/>
            <person name="Kawakami T."/>
            <person name="Noguchi S."/>
            <person name="Itoh T."/>
            <person name="Shigeta K."/>
            <person name="Senba T."/>
            <person name="Matsumura K."/>
            <person name="Nakajima Y."/>
            <person name="Mizuno T."/>
            <person name="Morinaga M."/>
            <person name="Sasaki M."/>
            <person name="Togashi T."/>
            <person name="Oyama M."/>
            <person name="Hata H."/>
            <person name="Watanabe M."/>
            <person name="Komatsu T."/>
            <person name="Mizushima-Sugano J."/>
            <person name="Satoh T."/>
            <person name="Shirai Y."/>
            <person name="Takahashi Y."/>
            <person name="Nakagawa K."/>
            <person name="Okumura K."/>
            <person name="Nagase T."/>
            <person name="Nomura N."/>
            <person name="Kikuchi H."/>
            <person name="Masuho Y."/>
            <person name="Yamashita R."/>
            <person name="Nakai K."/>
            <person name="Yada T."/>
            <person name="Nakamura Y."/>
            <person name="Ohara O."/>
            <person name="Isogai T."/>
            <person name="Sugano S."/>
        </authorList>
    </citation>
    <scope>NUCLEOTIDE SEQUENCE [LARGE SCALE MRNA]</scope>
    <source>
        <tissue>Stomach</tissue>
    </source>
</reference>
<reference key="2">
    <citation type="journal article" date="2006" name="Nature">
        <title>The DNA sequence and biological annotation of human chromosome 1.</title>
        <authorList>
            <person name="Gregory S.G."/>
            <person name="Barlow K.F."/>
            <person name="McLay K.E."/>
            <person name="Kaul R."/>
            <person name="Swarbreck D."/>
            <person name="Dunham A."/>
            <person name="Scott C.E."/>
            <person name="Howe K.L."/>
            <person name="Woodfine K."/>
            <person name="Spencer C.C.A."/>
            <person name="Jones M.C."/>
            <person name="Gillson C."/>
            <person name="Searle S."/>
            <person name="Zhou Y."/>
            <person name="Kokocinski F."/>
            <person name="McDonald L."/>
            <person name="Evans R."/>
            <person name="Phillips K."/>
            <person name="Atkinson A."/>
            <person name="Cooper R."/>
            <person name="Jones C."/>
            <person name="Hall R.E."/>
            <person name="Andrews T.D."/>
            <person name="Lloyd C."/>
            <person name="Ainscough R."/>
            <person name="Almeida J.P."/>
            <person name="Ambrose K.D."/>
            <person name="Anderson F."/>
            <person name="Andrew R.W."/>
            <person name="Ashwell R.I.S."/>
            <person name="Aubin K."/>
            <person name="Babbage A.K."/>
            <person name="Bagguley C.L."/>
            <person name="Bailey J."/>
            <person name="Beasley H."/>
            <person name="Bethel G."/>
            <person name="Bird C.P."/>
            <person name="Bray-Allen S."/>
            <person name="Brown J.Y."/>
            <person name="Brown A.J."/>
            <person name="Buckley D."/>
            <person name="Burton J."/>
            <person name="Bye J."/>
            <person name="Carder C."/>
            <person name="Chapman J.C."/>
            <person name="Clark S.Y."/>
            <person name="Clarke G."/>
            <person name="Clee C."/>
            <person name="Cobley V."/>
            <person name="Collier R.E."/>
            <person name="Corby N."/>
            <person name="Coville G.J."/>
            <person name="Davies J."/>
            <person name="Deadman R."/>
            <person name="Dunn M."/>
            <person name="Earthrowl M."/>
            <person name="Ellington A.G."/>
            <person name="Errington H."/>
            <person name="Frankish A."/>
            <person name="Frankland J."/>
            <person name="French L."/>
            <person name="Garner P."/>
            <person name="Garnett J."/>
            <person name="Gay L."/>
            <person name="Ghori M.R.J."/>
            <person name="Gibson R."/>
            <person name="Gilby L.M."/>
            <person name="Gillett W."/>
            <person name="Glithero R.J."/>
            <person name="Grafham D.V."/>
            <person name="Griffiths C."/>
            <person name="Griffiths-Jones S."/>
            <person name="Grocock R."/>
            <person name="Hammond S."/>
            <person name="Harrison E.S.I."/>
            <person name="Hart E."/>
            <person name="Haugen E."/>
            <person name="Heath P.D."/>
            <person name="Holmes S."/>
            <person name="Holt K."/>
            <person name="Howden P.J."/>
            <person name="Hunt A.R."/>
            <person name="Hunt S.E."/>
            <person name="Hunter G."/>
            <person name="Isherwood J."/>
            <person name="James R."/>
            <person name="Johnson C."/>
            <person name="Johnson D."/>
            <person name="Joy A."/>
            <person name="Kay M."/>
            <person name="Kershaw J.K."/>
            <person name="Kibukawa M."/>
            <person name="Kimberley A.M."/>
            <person name="King A."/>
            <person name="Knights A.J."/>
            <person name="Lad H."/>
            <person name="Laird G."/>
            <person name="Lawlor S."/>
            <person name="Leongamornlert D.A."/>
            <person name="Lloyd D.M."/>
            <person name="Loveland J."/>
            <person name="Lovell J."/>
            <person name="Lush M.J."/>
            <person name="Lyne R."/>
            <person name="Martin S."/>
            <person name="Mashreghi-Mohammadi M."/>
            <person name="Matthews L."/>
            <person name="Matthews N.S.W."/>
            <person name="McLaren S."/>
            <person name="Milne S."/>
            <person name="Mistry S."/>
            <person name="Moore M.J.F."/>
            <person name="Nickerson T."/>
            <person name="O'Dell C.N."/>
            <person name="Oliver K."/>
            <person name="Palmeiri A."/>
            <person name="Palmer S.A."/>
            <person name="Parker A."/>
            <person name="Patel D."/>
            <person name="Pearce A.V."/>
            <person name="Peck A.I."/>
            <person name="Pelan S."/>
            <person name="Phelps K."/>
            <person name="Phillimore B.J."/>
            <person name="Plumb R."/>
            <person name="Rajan J."/>
            <person name="Raymond C."/>
            <person name="Rouse G."/>
            <person name="Saenphimmachak C."/>
            <person name="Sehra H.K."/>
            <person name="Sheridan E."/>
            <person name="Shownkeen R."/>
            <person name="Sims S."/>
            <person name="Skuce C.D."/>
            <person name="Smith M."/>
            <person name="Steward C."/>
            <person name="Subramanian S."/>
            <person name="Sycamore N."/>
            <person name="Tracey A."/>
            <person name="Tromans A."/>
            <person name="Van Helmond Z."/>
            <person name="Wall M."/>
            <person name="Wallis J.M."/>
            <person name="White S."/>
            <person name="Whitehead S.L."/>
            <person name="Wilkinson J.E."/>
            <person name="Willey D.L."/>
            <person name="Williams H."/>
            <person name="Wilming L."/>
            <person name="Wray P.W."/>
            <person name="Wu Z."/>
            <person name="Coulson A."/>
            <person name="Vaudin M."/>
            <person name="Sulston J.E."/>
            <person name="Durbin R.M."/>
            <person name="Hubbard T."/>
            <person name="Wooster R."/>
            <person name="Dunham I."/>
            <person name="Carter N.P."/>
            <person name="McVean G."/>
            <person name="Ross M.T."/>
            <person name="Harrow J."/>
            <person name="Olson M.V."/>
            <person name="Beck S."/>
            <person name="Rogers J."/>
            <person name="Bentley D.R."/>
        </authorList>
    </citation>
    <scope>NUCLEOTIDE SEQUENCE [LARGE SCALE GENOMIC DNA]</scope>
</reference>
<reference key="3">
    <citation type="submission" date="2005-07" db="EMBL/GenBank/DDBJ databases">
        <authorList>
            <person name="Mural R.J."/>
            <person name="Istrail S."/>
            <person name="Sutton G.G."/>
            <person name="Florea L."/>
            <person name="Halpern A.L."/>
            <person name="Mobarry C.M."/>
            <person name="Lippert R."/>
            <person name="Walenz B."/>
            <person name="Shatkay H."/>
            <person name="Dew I."/>
            <person name="Miller J.R."/>
            <person name="Flanigan M.J."/>
            <person name="Edwards N.J."/>
            <person name="Bolanos R."/>
            <person name="Fasulo D."/>
            <person name="Halldorsson B.V."/>
            <person name="Hannenhalli S."/>
            <person name="Turner R."/>
            <person name="Yooseph S."/>
            <person name="Lu F."/>
            <person name="Nusskern D.R."/>
            <person name="Shue B.C."/>
            <person name="Zheng X.H."/>
            <person name="Zhong F."/>
            <person name="Delcher A.L."/>
            <person name="Huson D.H."/>
            <person name="Kravitz S.A."/>
            <person name="Mouchard L."/>
            <person name="Reinert K."/>
            <person name="Remington K.A."/>
            <person name="Clark A.G."/>
            <person name="Waterman M.S."/>
            <person name="Eichler E.E."/>
            <person name="Adams M.D."/>
            <person name="Hunkapiller M.W."/>
            <person name="Myers E.W."/>
            <person name="Venter J.C."/>
        </authorList>
    </citation>
    <scope>NUCLEOTIDE SEQUENCE [LARGE SCALE GENOMIC DNA]</scope>
</reference>
<comment type="caution">
    <text evidence="2">Product of a dubious CDS prediction. May be a non-coding RNA. No experimental confirmation available.</text>
</comment>